<gene>
    <name type="primary">Cyt-c-p</name>
    <name type="synonym">CYTC2</name>
    <name type="synonym">DC4</name>
    <name type="ORF">CG17903</name>
</gene>
<feature type="initiator methionine" description="Removed" evidence="3">
    <location>
        <position position="1"/>
    </location>
</feature>
<feature type="chain" id="PRO_0000108261" description="Cytochrome c-2">
    <location>
        <begin position="2"/>
        <end position="108"/>
    </location>
</feature>
<feature type="binding site" description="covalent">
    <location>
        <position position="19"/>
    </location>
    <ligand>
        <name>heme c</name>
        <dbReference type="ChEBI" id="CHEBI:61717"/>
    </ligand>
</feature>
<feature type="binding site" description="covalent">
    <location>
        <position position="22"/>
    </location>
    <ligand>
        <name>heme c</name>
        <dbReference type="ChEBI" id="CHEBI:61717"/>
    </ligand>
</feature>
<feature type="binding site" description="axial binding residue">
    <location>
        <position position="23"/>
    </location>
    <ligand>
        <name>heme c</name>
        <dbReference type="ChEBI" id="CHEBI:61717"/>
    </ligand>
    <ligandPart>
        <name>Fe</name>
        <dbReference type="ChEBI" id="CHEBI:18248"/>
    </ligandPart>
</feature>
<feature type="binding site" description="axial binding residue">
    <location>
        <position position="85"/>
    </location>
    <ligand>
        <name>heme c</name>
        <dbReference type="ChEBI" id="CHEBI:61717"/>
    </ligand>
    <ligandPart>
        <name>Fe</name>
        <dbReference type="ChEBI" id="CHEBI:18248"/>
    </ligandPart>
</feature>
<organism>
    <name type="scientific">Drosophila melanogaster</name>
    <name type="common">Fruit fly</name>
    <dbReference type="NCBI Taxonomy" id="7227"/>
    <lineage>
        <taxon>Eukaryota</taxon>
        <taxon>Metazoa</taxon>
        <taxon>Ecdysozoa</taxon>
        <taxon>Arthropoda</taxon>
        <taxon>Hexapoda</taxon>
        <taxon>Insecta</taxon>
        <taxon>Pterygota</taxon>
        <taxon>Neoptera</taxon>
        <taxon>Endopterygota</taxon>
        <taxon>Diptera</taxon>
        <taxon>Brachycera</taxon>
        <taxon>Muscomorpha</taxon>
        <taxon>Ephydroidea</taxon>
        <taxon>Drosophilidae</taxon>
        <taxon>Drosophila</taxon>
        <taxon>Sophophora</taxon>
    </lineage>
</organism>
<keyword id="KW-0903">Direct protein sequencing</keyword>
<keyword id="KW-0249">Electron transport</keyword>
<keyword id="KW-0349">Heme</keyword>
<keyword id="KW-0408">Iron</keyword>
<keyword id="KW-0479">Metal-binding</keyword>
<keyword id="KW-0496">Mitochondrion</keyword>
<keyword id="KW-1185">Reference proteome</keyword>
<keyword id="KW-0679">Respiratory chain</keyword>
<keyword id="KW-0813">Transport</keyword>
<proteinExistence type="evidence at protein level"/>
<evidence type="ECO:0000269" key="1">
    <source>
    </source>
</evidence>
<evidence type="ECO:0000269" key="2">
    <source>
    </source>
</evidence>
<evidence type="ECO:0000269" key="3">
    <source>
    </source>
</evidence>
<evidence type="ECO:0000305" key="4"/>
<dbReference type="EMBL" id="X01760">
    <property type="protein sequence ID" value="CAA25900.1"/>
    <property type="molecule type" value="Genomic_DNA"/>
</dbReference>
<dbReference type="EMBL" id="M11381">
    <property type="protein sequence ID" value="AAA28437.1"/>
    <property type="molecule type" value="Genomic_DNA"/>
</dbReference>
<dbReference type="EMBL" id="AE014134">
    <property type="protein sequence ID" value="AAF53554.1"/>
    <property type="molecule type" value="Genomic_DNA"/>
</dbReference>
<dbReference type="EMBL" id="AY071701">
    <property type="protein sequence ID" value="AAL49323.1"/>
    <property type="molecule type" value="mRNA"/>
</dbReference>
<dbReference type="PIR" id="A22945">
    <property type="entry name" value="CCFFDM"/>
</dbReference>
<dbReference type="RefSeq" id="NP_001285984.1">
    <property type="nucleotide sequence ID" value="NM_001299055.1"/>
</dbReference>
<dbReference type="RefSeq" id="NP_477176.1">
    <property type="nucleotide sequence ID" value="NM_057828.4"/>
</dbReference>
<dbReference type="SMR" id="P84029"/>
<dbReference type="BioGRID" id="61003">
    <property type="interactions" value="42"/>
</dbReference>
<dbReference type="FunCoup" id="P84029">
    <property type="interactions" value="1062"/>
</dbReference>
<dbReference type="IntAct" id="P84029">
    <property type="interactions" value="107"/>
</dbReference>
<dbReference type="STRING" id="7227.FBpp0080446"/>
<dbReference type="PaxDb" id="7227-FBpp0080446"/>
<dbReference type="DNASU" id="34996"/>
<dbReference type="EnsemblMetazoa" id="FBtr0080889">
    <property type="protein sequence ID" value="FBpp0080446"/>
    <property type="gene ID" value="FBgn0284248"/>
</dbReference>
<dbReference type="EnsemblMetazoa" id="FBtr0344849">
    <property type="protein sequence ID" value="FBpp0311164"/>
    <property type="gene ID" value="FBgn0284248"/>
</dbReference>
<dbReference type="GeneID" id="34996"/>
<dbReference type="KEGG" id="dme:Dmel_CG17903"/>
<dbReference type="AGR" id="FB:FBgn0284248"/>
<dbReference type="CTD" id="34996"/>
<dbReference type="FlyBase" id="FBgn0284248">
    <property type="gene designation" value="Cyt-c-p"/>
</dbReference>
<dbReference type="VEuPathDB" id="VectorBase:FBgn0284248"/>
<dbReference type="eggNOG" id="KOG3453">
    <property type="taxonomic scope" value="Eukaryota"/>
</dbReference>
<dbReference type="HOGENOM" id="CLU_060944_3_0_1"/>
<dbReference type="InParanoid" id="P84029"/>
<dbReference type="OMA" id="KARCAQC"/>
<dbReference type="OrthoDB" id="449280at2759"/>
<dbReference type="PhylomeDB" id="P84029"/>
<dbReference type="Reactome" id="R-DME-111457">
    <property type="pathway name" value="Release of apoptotic factors from the mitochondria"/>
</dbReference>
<dbReference type="Reactome" id="R-DME-111458">
    <property type="pathway name" value="Formation of apoptosome"/>
</dbReference>
<dbReference type="Reactome" id="R-DME-111459">
    <property type="pathway name" value="Activation of caspases through apoptosome-mediated cleavage"/>
</dbReference>
<dbReference type="Reactome" id="R-DME-3299685">
    <property type="pathway name" value="Detoxification of Reactive Oxygen Species"/>
</dbReference>
<dbReference type="Reactome" id="R-DME-5620971">
    <property type="pathway name" value="Pyroptosis"/>
</dbReference>
<dbReference type="Reactome" id="R-DME-5628897">
    <property type="pathway name" value="TP53 Regulates Metabolic Genes"/>
</dbReference>
<dbReference type="Reactome" id="R-DME-611105">
    <property type="pathway name" value="Respiratory electron transport"/>
</dbReference>
<dbReference type="Reactome" id="R-DME-9627069">
    <property type="pathway name" value="Regulation of the apoptosome activity"/>
</dbReference>
<dbReference type="Reactome" id="R-DME-9707564">
    <property type="pathway name" value="Cytoprotection by HMOX1"/>
</dbReference>
<dbReference type="ChiTaRS" id="Cyt-c-p">
    <property type="organism name" value="fly"/>
</dbReference>
<dbReference type="GenomeRNAi" id="34996"/>
<dbReference type="PRO" id="PR:P84029"/>
<dbReference type="Proteomes" id="UP000000803">
    <property type="component" value="Chromosome 2L"/>
</dbReference>
<dbReference type="Bgee" id="FBgn0284248">
    <property type="expression patterns" value="Expressed in DN1 neuron (Drosophila) in brain and 300 other cell types or tissues"/>
</dbReference>
<dbReference type="ExpressionAtlas" id="P84029">
    <property type="expression patterns" value="baseline and differential"/>
</dbReference>
<dbReference type="GO" id="GO:0005758">
    <property type="term" value="C:mitochondrial intermembrane space"/>
    <property type="evidence" value="ECO:0000318"/>
    <property type="project" value="GO_Central"/>
</dbReference>
<dbReference type="GO" id="GO:0009055">
    <property type="term" value="F:electron transfer activity"/>
    <property type="evidence" value="ECO:0000318"/>
    <property type="project" value="GO_Central"/>
</dbReference>
<dbReference type="GO" id="GO:0020037">
    <property type="term" value="F:heme binding"/>
    <property type="evidence" value="ECO:0007669"/>
    <property type="project" value="InterPro"/>
</dbReference>
<dbReference type="GO" id="GO:0046872">
    <property type="term" value="F:metal ion binding"/>
    <property type="evidence" value="ECO:0007669"/>
    <property type="project" value="UniProtKB-KW"/>
</dbReference>
<dbReference type="GO" id="GO:0006123">
    <property type="term" value="P:mitochondrial electron transport, cytochrome c to oxygen"/>
    <property type="evidence" value="ECO:0000318"/>
    <property type="project" value="GO_Central"/>
</dbReference>
<dbReference type="GO" id="GO:0006122">
    <property type="term" value="P:mitochondrial electron transport, ubiquinol to cytochrome c"/>
    <property type="evidence" value="ECO:0000318"/>
    <property type="project" value="GO_Central"/>
</dbReference>
<dbReference type="FunFam" id="1.10.760.10:FF:000001">
    <property type="entry name" value="Cytochrome c iso-1"/>
    <property type="match status" value="1"/>
</dbReference>
<dbReference type="Gene3D" id="1.10.760.10">
    <property type="entry name" value="Cytochrome c-like domain"/>
    <property type="match status" value="1"/>
</dbReference>
<dbReference type="InterPro" id="IPR009056">
    <property type="entry name" value="Cyt_c-like_dom"/>
</dbReference>
<dbReference type="InterPro" id="IPR036909">
    <property type="entry name" value="Cyt_c-like_dom_sf"/>
</dbReference>
<dbReference type="InterPro" id="IPR002327">
    <property type="entry name" value="Cyt_c_1A/1B"/>
</dbReference>
<dbReference type="PANTHER" id="PTHR11961">
    <property type="entry name" value="CYTOCHROME C"/>
    <property type="match status" value="1"/>
</dbReference>
<dbReference type="Pfam" id="PF00034">
    <property type="entry name" value="Cytochrom_C"/>
    <property type="match status" value="1"/>
</dbReference>
<dbReference type="PRINTS" id="PR00604">
    <property type="entry name" value="CYTCHRMECIAB"/>
</dbReference>
<dbReference type="SUPFAM" id="SSF46626">
    <property type="entry name" value="Cytochrome c"/>
    <property type="match status" value="1"/>
</dbReference>
<dbReference type="PROSITE" id="PS51007">
    <property type="entry name" value="CYTC"/>
    <property type="match status" value="1"/>
</dbReference>
<accession>P84029</accession>
<accession>P00033</accession>
<accession>P00034</accession>
<accession>Q9VJJ3</accession>
<name>CYC2_DROME</name>
<comment type="function">
    <text evidence="2">Electron carrier protein. The oxidized form of the cytochrome c heme group can accept an electron from the heme group of the cytochrome c1 subunit of cytochrome reductase. Cytochrome c then transfers this electron to the cytochrome oxidase complex, the final protein carrier in the mitochondrial electron-transport chain.</text>
</comment>
<comment type="subcellular location">
    <subcellularLocation>
        <location evidence="1">Mitochondrion intermembrane space</location>
    </subcellularLocation>
    <text>Loosely associated with the inner membrane.</text>
</comment>
<comment type="developmental stage">
    <text evidence="2">Expressed at varying, but relatively high levels throughout development.</text>
</comment>
<comment type="PTM">
    <text>Binds 1 heme c group covalently per subunit.</text>
</comment>
<comment type="miscellaneous">
    <text>There are two cytochrome C genes in Drosophila: Cyt-c-d (distal) and Cyt-c-p (proximal).</text>
</comment>
<comment type="similarity">
    <text evidence="4">Belongs to the cytochrome c family.</text>
</comment>
<comment type="online information" name="Protein Spotlight">
    <link uri="https://www.proteinspotlight.org/back_issues/076"/>
    <text>Life shuttle - Issue 76 of November 2006</text>
</comment>
<sequence>MGVPAGDVEKGKKLFVQRCAQCHTVEAGGKHKVGPNLHGLIGRKTGQAAGFAYTDANKAKGITWNEDTLFEYLENPKKYIPGTKMIFAGLKKPNERGDLIAYLKSATK</sequence>
<protein>
    <recommendedName>
        <fullName>Cytochrome c-2</fullName>
    </recommendedName>
    <alternativeName>
        <fullName>Cytochrome c-proximal</fullName>
    </alternativeName>
</protein>
<reference key="1">
    <citation type="journal article" date="1985" name="Nucleic Acids Res.">
        <title>Characterization of two Drosophila melanogaster cytochrome c genes and their transcripts.</title>
        <authorList>
            <person name="Limbach K.J."/>
            <person name="Wu R."/>
        </authorList>
    </citation>
    <scope>NUCLEOTIDE SEQUENCE [GENOMIC DNA]</scope>
    <scope>FUNCTION</scope>
    <scope>DEVELOPMENTAL STAGE</scope>
</reference>
<reference key="2">
    <citation type="journal article" date="1985" name="Proc. Natl. Acad. Sci. U.S.A.">
        <title>Developmental expression of nuclear genes that encode mitochondrial proteins: insect cytochromes c.</title>
        <authorList>
            <person name="Swanson M.S."/>
            <person name="Zieminn S.M."/>
            <person name="Miller D.D."/>
            <person name="Garber E.A.E."/>
            <person name="Margoliash E."/>
        </authorList>
    </citation>
    <scope>NUCLEOTIDE SEQUENCE [GENOMIC DNA]</scope>
    <scope>SUBCELLULAR LOCATION</scope>
</reference>
<reference key="3">
    <citation type="journal article" date="2000" name="Science">
        <title>The genome sequence of Drosophila melanogaster.</title>
        <authorList>
            <person name="Adams M.D."/>
            <person name="Celniker S.E."/>
            <person name="Holt R.A."/>
            <person name="Evans C.A."/>
            <person name="Gocayne J.D."/>
            <person name="Amanatides P.G."/>
            <person name="Scherer S.E."/>
            <person name="Li P.W."/>
            <person name="Hoskins R.A."/>
            <person name="Galle R.F."/>
            <person name="George R.A."/>
            <person name="Lewis S.E."/>
            <person name="Richards S."/>
            <person name="Ashburner M."/>
            <person name="Henderson S.N."/>
            <person name="Sutton G.G."/>
            <person name="Wortman J.R."/>
            <person name="Yandell M.D."/>
            <person name="Zhang Q."/>
            <person name="Chen L.X."/>
            <person name="Brandon R.C."/>
            <person name="Rogers Y.-H.C."/>
            <person name="Blazej R.G."/>
            <person name="Champe M."/>
            <person name="Pfeiffer B.D."/>
            <person name="Wan K.H."/>
            <person name="Doyle C."/>
            <person name="Baxter E.G."/>
            <person name="Helt G."/>
            <person name="Nelson C.R."/>
            <person name="Miklos G.L.G."/>
            <person name="Abril J.F."/>
            <person name="Agbayani A."/>
            <person name="An H.-J."/>
            <person name="Andrews-Pfannkoch C."/>
            <person name="Baldwin D."/>
            <person name="Ballew R.M."/>
            <person name="Basu A."/>
            <person name="Baxendale J."/>
            <person name="Bayraktaroglu L."/>
            <person name="Beasley E.M."/>
            <person name="Beeson K.Y."/>
            <person name="Benos P.V."/>
            <person name="Berman B.P."/>
            <person name="Bhandari D."/>
            <person name="Bolshakov S."/>
            <person name="Borkova D."/>
            <person name="Botchan M.R."/>
            <person name="Bouck J."/>
            <person name="Brokstein P."/>
            <person name="Brottier P."/>
            <person name="Burtis K.C."/>
            <person name="Busam D.A."/>
            <person name="Butler H."/>
            <person name="Cadieu E."/>
            <person name="Center A."/>
            <person name="Chandra I."/>
            <person name="Cherry J.M."/>
            <person name="Cawley S."/>
            <person name="Dahlke C."/>
            <person name="Davenport L.B."/>
            <person name="Davies P."/>
            <person name="de Pablos B."/>
            <person name="Delcher A."/>
            <person name="Deng Z."/>
            <person name="Mays A.D."/>
            <person name="Dew I."/>
            <person name="Dietz S.M."/>
            <person name="Dodson K."/>
            <person name="Doup L.E."/>
            <person name="Downes M."/>
            <person name="Dugan-Rocha S."/>
            <person name="Dunkov B.C."/>
            <person name="Dunn P."/>
            <person name="Durbin K.J."/>
            <person name="Evangelista C.C."/>
            <person name="Ferraz C."/>
            <person name="Ferriera S."/>
            <person name="Fleischmann W."/>
            <person name="Fosler C."/>
            <person name="Gabrielian A.E."/>
            <person name="Garg N.S."/>
            <person name="Gelbart W.M."/>
            <person name="Glasser K."/>
            <person name="Glodek A."/>
            <person name="Gong F."/>
            <person name="Gorrell J.H."/>
            <person name="Gu Z."/>
            <person name="Guan P."/>
            <person name="Harris M."/>
            <person name="Harris N.L."/>
            <person name="Harvey D.A."/>
            <person name="Heiman T.J."/>
            <person name="Hernandez J.R."/>
            <person name="Houck J."/>
            <person name="Hostin D."/>
            <person name="Houston K.A."/>
            <person name="Howland T.J."/>
            <person name="Wei M.-H."/>
            <person name="Ibegwam C."/>
            <person name="Jalali M."/>
            <person name="Kalush F."/>
            <person name="Karpen G.H."/>
            <person name="Ke Z."/>
            <person name="Kennison J.A."/>
            <person name="Ketchum K.A."/>
            <person name="Kimmel B.E."/>
            <person name="Kodira C.D."/>
            <person name="Kraft C.L."/>
            <person name="Kravitz S."/>
            <person name="Kulp D."/>
            <person name="Lai Z."/>
            <person name="Lasko P."/>
            <person name="Lei Y."/>
            <person name="Levitsky A.A."/>
            <person name="Li J.H."/>
            <person name="Li Z."/>
            <person name="Liang Y."/>
            <person name="Lin X."/>
            <person name="Liu X."/>
            <person name="Mattei B."/>
            <person name="McIntosh T.C."/>
            <person name="McLeod M.P."/>
            <person name="McPherson D."/>
            <person name="Merkulov G."/>
            <person name="Milshina N.V."/>
            <person name="Mobarry C."/>
            <person name="Morris J."/>
            <person name="Moshrefi A."/>
            <person name="Mount S.M."/>
            <person name="Moy M."/>
            <person name="Murphy B."/>
            <person name="Murphy L."/>
            <person name="Muzny D.M."/>
            <person name="Nelson D.L."/>
            <person name="Nelson D.R."/>
            <person name="Nelson K.A."/>
            <person name="Nixon K."/>
            <person name="Nusskern D.R."/>
            <person name="Pacleb J.M."/>
            <person name="Palazzolo M."/>
            <person name="Pittman G.S."/>
            <person name="Pan S."/>
            <person name="Pollard J."/>
            <person name="Puri V."/>
            <person name="Reese M.G."/>
            <person name="Reinert K."/>
            <person name="Remington K."/>
            <person name="Saunders R.D.C."/>
            <person name="Scheeler F."/>
            <person name="Shen H."/>
            <person name="Shue B.C."/>
            <person name="Siden-Kiamos I."/>
            <person name="Simpson M."/>
            <person name="Skupski M.P."/>
            <person name="Smith T.J."/>
            <person name="Spier E."/>
            <person name="Spradling A.C."/>
            <person name="Stapleton M."/>
            <person name="Strong R."/>
            <person name="Sun E."/>
            <person name="Svirskas R."/>
            <person name="Tector C."/>
            <person name="Turner R."/>
            <person name="Venter E."/>
            <person name="Wang A.H."/>
            <person name="Wang X."/>
            <person name="Wang Z.-Y."/>
            <person name="Wassarman D.A."/>
            <person name="Weinstock G.M."/>
            <person name="Weissenbach J."/>
            <person name="Williams S.M."/>
            <person name="Woodage T."/>
            <person name="Worley K.C."/>
            <person name="Wu D."/>
            <person name="Yang S."/>
            <person name="Yao Q.A."/>
            <person name="Ye J."/>
            <person name="Yeh R.-F."/>
            <person name="Zaveri J.S."/>
            <person name="Zhan M."/>
            <person name="Zhang G."/>
            <person name="Zhao Q."/>
            <person name="Zheng L."/>
            <person name="Zheng X.H."/>
            <person name="Zhong F.N."/>
            <person name="Zhong W."/>
            <person name="Zhou X."/>
            <person name="Zhu S.C."/>
            <person name="Zhu X."/>
            <person name="Smith H.O."/>
            <person name="Gibbs R.A."/>
            <person name="Myers E.W."/>
            <person name="Rubin G.M."/>
            <person name="Venter J.C."/>
        </authorList>
    </citation>
    <scope>NUCLEOTIDE SEQUENCE [LARGE SCALE GENOMIC DNA]</scope>
    <source>
        <strain>Berkeley</strain>
    </source>
</reference>
<reference key="4">
    <citation type="journal article" date="2002" name="Genome Biol.">
        <title>Annotation of the Drosophila melanogaster euchromatic genome: a systematic review.</title>
        <authorList>
            <person name="Misra S."/>
            <person name="Crosby M.A."/>
            <person name="Mungall C.J."/>
            <person name="Matthews B.B."/>
            <person name="Campbell K.S."/>
            <person name="Hradecky P."/>
            <person name="Huang Y."/>
            <person name="Kaminker J.S."/>
            <person name="Millburn G.H."/>
            <person name="Prochnik S.E."/>
            <person name="Smith C.D."/>
            <person name="Tupy J.L."/>
            <person name="Whitfield E.J."/>
            <person name="Bayraktaroglu L."/>
            <person name="Berman B.P."/>
            <person name="Bettencourt B.R."/>
            <person name="Celniker S.E."/>
            <person name="de Grey A.D.N.J."/>
            <person name="Drysdale R.A."/>
            <person name="Harris N.L."/>
            <person name="Richter J."/>
            <person name="Russo S."/>
            <person name="Schroeder A.J."/>
            <person name="Shu S.Q."/>
            <person name="Stapleton M."/>
            <person name="Yamada C."/>
            <person name="Ashburner M."/>
            <person name="Gelbart W.M."/>
            <person name="Rubin G.M."/>
            <person name="Lewis S.E."/>
        </authorList>
    </citation>
    <scope>GENOME REANNOTATION</scope>
    <source>
        <strain>Berkeley</strain>
    </source>
</reference>
<reference key="5">
    <citation type="submission" date="2003-08" db="EMBL/GenBank/DDBJ databases">
        <authorList>
            <person name="Stapleton M."/>
            <person name="Brokstein P."/>
            <person name="Hong L."/>
            <person name="Agbayani A."/>
            <person name="Carlson J.W."/>
            <person name="Champe M."/>
            <person name="Chavez C."/>
            <person name="Dorsett V."/>
            <person name="Dresnek D."/>
            <person name="Farfan D."/>
            <person name="Frise E."/>
            <person name="George R.A."/>
            <person name="Gonzalez M."/>
            <person name="Guarin H."/>
            <person name="Kronmiller B."/>
            <person name="Li P.W."/>
            <person name="Liao G."/>
            <person name="Miranda A."/>
            <person name="Mungall C.J."/>
            <person name="Nunoo J."/>
            <person name="Pacleb J.M."/>
            <person name="Paragas V."/>
            <person name="Park S."/>
            <person name="Patel S."/>
            <person name="Phouanenavong S."/>
            <person name="Wan K.H."/>
            <person name="Yu C."/>
            <person name="Lewis S.E."/>
            <person name="Rubin G.M."/>
            <person name="Celniker S.E."/>
        </authorList>
    </citation>
    <scope>NUCLEOTIDE SEQUENCE [LARGE SCALE MRNA]</scope>
    <source>
        <strain>Berkeley</strain>
        <tissue>Head</tissue>
    </source>
</reference>
<reference key="6">
    <citation type="journal article" date="1986" name="J. Biochem.">
        <title>Developmental variation and amino acid sequences of cytochromes c of the fruit fly Drosophila melanogaster and the flesh fly Boettcherisca peregrina.</title>
        <authorList>
            <person name="Inoue S."/>
            <person name="Inoue H."/>
            <person name="Hiroyoshi T."/>
            <person name="Matsubara H."/>
            <person name="Yamanaka T."/>
        </authorList>
    </citation>
    <scope>PROTEIN SEQUENCE OF 2-108</scope>
</reference>